<dbReference type="EC" id="2.1.2.1" evidence="1"/>
<dbReference type="EMBL" id="AE015929">
    <property type="protein sequence ID" value="AAO05309.1"/>
    <property type="molecule type" value="Genomic_DNA"/>
</dbReference>
<dbReference type="RefSeq" id="NP_765265.1">
    <property type="nucleotide sequence ID" value="NC_004461.1"/>
</dbReference>
<dbReference type="RefSeq" id="WP_002468313.1">
    <property type="nucleotide sequence ID" value="NZ_WBME01000021.1"/>
</dbReference>
<dbReference type="SMR" id="Q8CRN3"/>
<dbReference type="GeneID" id="50018189"/>
<dbReference type="KEGG" id="sep:SE_1710"/>
<dbReference type="PATRIC" id="fig|176280.10.peg.1671"/>
<dbReference type="eggNOG" id="COG0112">
    <property type="taxonomic scope" value="Bacteria"/>
</dbReference>
<dbReference type="HOGENOM" id="CLU_022477_2_1_9"/>
<dbReference type="OrthoDB" id="9803846at2"/>
<dbReference type="UniPathway" id="UPA00193"/>
<dbReference type="UniPathway" id="UPA00288">
    <property type="reaction ID" value="UER01023"/>
</dbReference>
<dbReference type="Proteomes" id="UP000001411">
    <property type="component" value="Chromosome"/>
</dbReference>
<dbReference type="GO" id="GO:0005829">
    <property type="term" value="C:cytosol"/>
    <property type="evidence" value="ECO:0007669"/>
    <property type="project" value="TreeGrafter"/>
</dbReference>
<dbReference type="GO" id="GO:0004372">
    <property type="term" value="F:glycine hydroxymethyltransferase activity"/>
    <property type="evidence" value="ECO:0007669"/>
    <property type="project" value="UniProtKB-UniRule"/>
</dbReference>
<dbReference type="GO" id="GO:0030170">
    <property type="term" value="F:pyridoxal phosphate binding"/>
    <property type="evidence" value="ECO:0007669"/>
    <property type="project" value="UniProtKB-UniRule"/>
</dbReference>
<dbReference type="GO" id="GO:0019264">
    <property type="term" value="P:glycine biosynthetic process from serine"/>
    <property type="evidence" value="ECO:0007669"/>
    <property type="project" value="UniProtKB-UniRule"/>
</dbReference>
<dbReference type="GO" id="GO:0035999">
    <property type="term" value="P:tetrahydrofolate interconversion"/>
    <property type="evidence" value="ECO:0007669"/>
    <property type="project" value="UniProtKB-UniRule"/>
</dbReference>
<dbReference type="CDD" id="cd00378">
    <property type="entry name" value="SHMT"/>
    <property type="match status" value="1"/>
</dbReference>
<dbReference type="FunFam" id="3.40.640.10:FF:000001">
    <property type="entry name" value="Serine hydroxymethyltransferase"/>
    <property type="match status" value="1"/>
</dbReference>
<dbReference type="FunFam" id="3.90.1150.10:FF:000003">
    <property type="entry name" value="Serine hydroxymethyltransferase"/>
    <property type="match status" value="1"/>
</dbReference>
<dbReference type="Gene3D" id="3.90.1150.10">
    <property type="entry name" value="Aspartate Aminotransferase, domain 1"/>
    <property type="match status" value="1"/>
</dbReference>
<dbReference type="Gene3D" id="3.40.640.10">
    <property type="entry name" value="Type I PLP-dependent aspartate aminotransferase-like (Major domain)"/>
    <property type="match status" value="1"/>
</dbReference>
<dbReference type="HAMAP" id="MF_00051">
    <property type="entry name" value="SHMT"/>
    <property type="match status" value="1"/>
</dbReference>
<dbReference type="InterPro" id="IPR015424">
    <property type="entry name" value="PyrdxlP-dep_Trfase"/>
</dbReference>
<dbReference type="InterPro" id="IPR015421">
    <property type="entry name" value="PyrdxlP-dep_Trfase_major"/>
</dbReference>
<dbReference type="InterPro" id="IPR015422">
    <property type="entry name" value="PyrdxlP-dep_Trfase_small"/>
</dbReference>
<dbReference type="InterPro" id="IPR001085">
    <property type="entry name" value="Ser_HO-MeTrfase"/>
</dbReference>
<dbReference type="InterPro" id="IPR049943">
    <property type="entry name" value="Ser_HO-MeTrfase-like"/>
</dbReference>
<dbReference type="InterPro" id="IPR019798">
    <property type="entry name" value="Ser_HO-MeTrfase_PLP_BS"/>
</dbReference>
<dbReference type="InterPro" id="IPR039429">
    <property type="entry name" value="SHMT-like_dom"/>
</dbReference>
<dbReference type="NCBIfam" id="NF000586">
    <property type="entry name" value="PRK00011.1"/>
    <property type="match status" value="1"/>
</dbReference>
<dbReference type="PANTHER" id="PTHR11680">
    <property type="entry name" value="SERINE HYDROXYMETHYLTRANSFERASE"/>
    <property type="match status" value="1"/>
</dbReference>
<dbReference type="PANTHER" id="PTHR11680:SF35">
    <property type="entry name" value="SERINE HYDROXYMETHYLTRANSFERASE 1"/>
    <property type="match status" value="1"/>
</dbReference>
<dbReference type="Pfam" id="PF00464">
    <property type="entry name" value="SHMT"/>
    <property type="match status" value="1"/>
</dbReference>
<dbReference type="PIRSF" id="PIRSF000412">
    <property type="entry name" value="SHMT"/>
    <property type="match status" value="1"/>
</dbReference>
<dbReference type="SUPFAM" id="SSF53383">
    <property type="entry name" value="PLP-dependent transferases"/>
    <property type="match status" value="1"/>
</dbReference>
<dbReference type="PROSITE" id="PS00096">
    <property type="entry name" value="SHMT"/>
    <property type="match status" value="1"/>
</dbReference>
<name>GLYA_STAES</name>
<protein>
    <recommendedName>
        <fullName evidence="1">Serine hydroxymethyltransferase</fullName>
        <shortName evidence="1">SHMT</shortName>
        <shortName evidence="1">Serine methylase</shortName>
        <ecNumber evidence="1">2.1.2.1</ecNumber>
    </recommendedName>
</protein>
<proteinExistence type="inferred from homology"/>
<comment type="function">
    <text evidence="1">Catalyzes the reversible interconversion of serine and glycine with tetrahydrofolate (THF) serving as the one-carbon carrier. This reaction serves as the major source of one-carbon groups required for the biosynthesis of purines, thymidylate, methionine, and other important biomolecules. Also exhibits THF-independent aldolase activity toward beta-hydroxyamino acids, producing glycine and aldehydes, via a retro-aldol mechanism.</text>
</comment>
<comment type="catalytic activity">
    <reaction evidence="1">
        <text>(6R)-5,10-methylene-5,6,7,8-tetrahydrofolate + glycine + H2O = (6S)-5,6,7,8-tetrahydrofolate + L-serine</text>
        <dbReference type="Rhea" id="RHEA:15481"/>
        <dbReference type="ChEBI" id="CHEBI:15377"/>
        <dbReference type="ChEBI" id="CHEBI:15636"/>
        <dbReference type="ChEBI" id="CHEBI:33384"/>
        <dbReference type="ChEBI" id="CHEBI:57305"/>
        <dbReference type="ChEBI" id="CHEBI:57453"/>
        <dbReference type="EC" id="2.1.2.1"/>
    </reaction>
</comment>
<comment type="cofactor">
    <cofactor evidence="1">
        <name>pyridoxal 5'-phosphate</name>
        <dbReference type="ChEBI" id="CHEBI:597326"/>
    </cofactor>
</comment>
<comment type="pathway">
    <text evidence="1">One-carbon metabolism; tetrahydrofolate interconversion.</text>
</comment>
<comment type="pathway">
    <text evidence="1">Amino-acid biosynthesis; glycine biosynthesis; glycine from L-serine: step 1/1.</text>
</comment>
<comment type="subunit">
    <text evidence="1">Homodimer.</text>
</comment>
<comment type="subcellular location">
    <subcellularLocation>
        <location evidence="1">Cytoplasm</location>
    </subcellularLocation>
</comment>
<comment type="similarity">
    <text evidence="1">Belongs to the SHMT family.</text>
</comment>
<organism>
    <name type="scientific">Staphylococcus epidermidis (strain ATCC 12228 / FDA PCI 1200)</name>
    <dbReference type="NCBI Taxonomy" id="176280"/>
    <lineage>
        <taxon>Bacteria</taxon>
        <taxon>Bacillati</taxon>
        <taxon>Bacillota</taxon>
        <taxon>Bacilli</taxon>
        <taxon>Bacillales</taxon>
        <taxon>Staphylococcaceae</taxon>
        <taxon>Staphylococcus</taxon>
    </lineage>
</organism>
<sequence>MSYIEKKDKVVYDAIQKEFQRQNSNIELIASENFVSQAVMEAQGSVLTNKYAEGYPGRRYYGGCEHVDVTESIAIERAKALFGAEHVNVQPHSGSQANMAVYLVALEMGDTVLGMNLSHGGHLTHGATVNFSGKFYHFVEYGVDQENELINYDEVRRLAIEHQPKLIVAGASAYSRTIDFKKFKEIADEVGAKLMVDMAHIAGLVAAGLHPNPVEYADFVTTTTHKTLRGPRGGMILCKEEYKKDIDKTIFPGIQGGPLEHVIAAKAVAFGEALNDDFKDYQNQVIKNAQALAQTLIEEGFRVVSGGTDNHLVAVDVKGSINMTGKLAEETLDKVGITCNKNTIPFDKEKPFVTSGVRLGTPAATTRGFDESAFVEVAKIISLALNNYDNDTKLNEAKERVHALTSKYPLYN</sequence>
<feature type="chain" id="PRO_0000113667" description="Serine hydroxymethyltransferase">
    <location>
        <begin position="1"/>
        <end position="412"/>
    </location>
</feature>
<feature type="binding site" evidence="1">
    <location>
        <position position="117"/>
    </location>
    <ligand>
        <name>(6S)-5,6,7,8-tetrahydrofolate</name>
        <dbReference type="ChEBI" id="CHEBI:57453"/>
    </ligand>
</feature>
<feature type="binding site" evidence="1">
    <location>
        <begin position="121"/>
        <end position="123"/>
    </location>
    <ligand>
        <name>(6S)-5,6,7,8-tetrahydrofolate</name>
        <dbReference type="ChEBI" id="CHEBI:57453"/>
    </ligand>
</feature>
<feature type="site" description="Plays an important role in substrate specificity" evidence="1">
    <location>
        <position position="225"/>
    </location>
</feature>
<feature type="modified residue" description="N6-(pyridoxal phosphate)lysine" evidence="1">
    <location>
        <position position="226"/>
    </location>
</feature>
<evidence type="ECO:0000255" key="1">
    <source>
        <dbReference type="HAMAP-Rule" id="MF_00051"/>
    </source>
</evidence>
<gene>
    <name evidence="1" type="primary">glyA</name>
    <name type="ordered locus">SE_1710</name>
</gene>
<keyword id="KW-0028">Amino-acid biosynthesis</keyword>
<keyword id="KW-0963">Cytoplasm</keyword>
<keyword id="KW-0554">One-carbon metabolism</keyword>
<keyword id="KW-0663">Pyridoxal phosphate</keyword>
<keyword id="KW-0808">Transferase</keyword>
<reference key="1">
    <citation type="journal article" date="2003" name="Mol. Microbiol.">
        <title>Genome-based analysis of virulence genes in a non-biofilm-forming Staphylococcus epidermidis strain (ATCC 12228).</title>
        <authorList>
            <person name="Zhang Y.-Q."/>
            <person name="Ren S.-X."/>
            <person name="Li H.-L."/>
            <person name="Wang Y.-X."/>
            <person name="Fu G."/>
            <person name="Yang J."/>
            <person name="Qin Z.-Q."/>
            <person name="Miao Y.-G."/>
            <person name="Wang W.-Y."/>
            <person name="Chen R.-S."/>
            <person name="Shen Y."/>
            <person name="Chen Z."/>
            <person name="Yuan Z.-H."/>
            <person name="Zhao G.-P."/>
            <person name="Qu D."/>
            <person name="Danchin A."/>
            <person name="Wen Y.-M."/>
        </authorList>
    </citation>
    <scope>NUCLEOTIDE SEQUENCE [LARGE SCALE GENOMIC DNA]</scope>
    <source>
        <strain>ATCC 12228 / FDA PCI 1200</strain>
    </source>
</reference>
<accession>Q8CRN3</accession>